<reference evidence="8" key="1">
    <citation type="journal article" date="2007" name="Science">
        <title>The Fusarium graminearum genome reveals a link between localized polymorphism and pathogen specialization.</title>
        <authorList>
            <person name="Cuomo C.A."/>
            <person name="Gueldener U."/>
            <person name="Xu J.-R."/>
            <person name="Trail F."/>
            <person name="Turgeon B.G."/>
            <person name="Di Pietro A."/>
            <person name="Walton J.D."/>
            <person name="Ma L.-J."/>
            <person name="Baker S.E."/>
            <person name="Rep M."/>
            <person name="Adam G."/>
            <person name="Antoniw J."/>
            <person name="Baldwin T."/>
            <person name="Calvo S.E."/>
            <person name="Chang Y.-L."/>
            <person name="DeCaprio D."/>
            <person name="Gale L.R."/>
            <person name="Gnerre S."/>
            <person name="Goswami R.S."/>
            <person name="Hammond-Kosack K."/>
            <person name="Harris L.J."/>
            <person name="Hilburn K."/>
            <person name="Kennell J.C."/>
            <person name="Kroken S."/>
            <person name="Magnuson J.K."/>
            <person name="Mannhaupt G."/>
            <person name="Mauceli E.W."/>
            <person name="Mewes H.-W."/>
            <person name="Mitterbauer R."/>
            <person name="Muehlbauer G."/>
            <person name="Muensterkoetter M."/>
            <person name="Nelson D."/>
            <person name="O'Donnell K."/>
            <person name="Ouellet T."/>
            <person name="Qi W."/>
            <person name="Quesneville H."/>
            <person name="Roncero M.I.G."/>
            <person name="Seong K.-Y."/>
            <person name="Tetko I.V."/>
            <person name="Urban M."/>
            <person name="Waalwijk C."/>
            <person name="Ward T.J."/>
            <person name="Yao J."/>
            <person name="Birren B.W."/>
            <person name="Kistler H.C."/>
        </authorList>
    </citation>
    <scope>NUCLEOTIDE SEQUENCE [LARGE SCALE GENOMIC DNA]</scope>
    <source>
        <strain evidence="8">ATCC MYA-4620 / CBS 123657 / FGSC 9075 / NRRL 31084 / PH-1</strain>
    </source>
</reference>
<reference evidence="8" key="2">
    <citation type="journal article" date="2010" name="Nature">
        <title>Comparative genomics reveals mobile pathogenicity chromosomes in Fusarium.</title>
        <authorList>
            <person name="Ma L.-J."/>
            <person name="van der Does H.C."/>
            <person name="Borkovich K.A."/>
            <person name="Coleman J.J."/>
            <person name="Daboussi M.-J."/>
            <person name="Di Pietro A."/>
            <person name="Dufresne M."/>
            <person name="Freitag M."/>
            <person name="Grabherr M."/>
            <person name="Henrissat B."/>
            <person name="Houterman P.M."/>
            <person name="Kang S."/>
            <person name="Shim W.-B."/>
            <person name="Woloshuk C."/>
            <person name="Xie X."/>
            <person name="Xu J.-R."/>
            <person name="Antoniw J."/>
            <person name="Baker S.E."/>
            <person name="Bluhm B.H."/>
            <person name="Breakspear A."/>
            <person name="Brown D.W."/>
            <person name="Butchko R.A.E."/>
            <person name="Chapman S."/>
            <person name="Coulson R."/>
            <person name="Coutinho P.M."/>
            <person name="Danchin E.G.J."/>
            <person name="Diener A."/>
            <person name="Gale L.R."/>
            <person name="Gardiner D.M."/>
            <person name="Goff S."/>
            <person name="Hammond-Kosack K.E."/>
            <person name="Hilburn K."/>
            <person name="Hua-Van A."/>
            <person name="Jonkers W."/>
            <person name="Kazan K."/>
            <person name="Kodira C.D."/>
            <person name="Koehrsen M."/>
            <person name="Kumar L."/>
            <person name="Lee Y.-H."/>
            <person name="Li L."/>
            <person name="Manners J.M."/>
            <person name="Miranda-Saavedra D."/>
            <person name="Mukherjee M."/>
            <person name="Park G."/>
            <person name="Park J."/>
            <person name="Park S.-Y."/>
            <person name="Proctor R.H."/>
            <person name="Regev A."/>
            <person name="Ruiz-Roldan M.C."/>
            <person name="Sain D."/>
            <person name="Sakthikumar S."/>
            <person name="Sykes S."/>
            <person name="Schwartz D.C."/>
            <person name="Turgeon B.G."/>
            <person name="Wapinski I."/>
            <person name="Yoder O."/>
            <person name="Young S."/>
            <person name="Zeng Q."/>
            <person name="Zhou S."/>
            <person name="Galagan J."/>
            <person name="Cuomo C.A."/>
            <person name="Kistler H.C."/>
            <person name="Rep M."/>
        </authorList>
    </citation>
    <scope>GENOME REANNOTATION</scope>
    <source>
        <strain evidence="8">ATCC MYA-4620 / CBS 123657 / FGSC 9075 / NRRL 31084 / PH-1</strain>
    </source>
</reference>
<reference evidence="8" key="3">
    <citation type="journal article" date="2015" name="BMC Genomics">
        <title>The completed genome sequence of the pathogenic ascomycete fungus Fusarium graminearum.</title>
        <authorList>
            <person name="King R."/>
            <person name="Urban M."/>
            <person name="Hammond-Kosack M.C.U."/>
            <person name="Hassani-Pak K."/>
            <person name="Hammond-Kosack K.E."/>
        </authorList>
    </citation>
    <scope>NUCLEOTIDE SEQUENCE [LARGE SCALE GENOMIC DNA]</scope>
    <source>
        <strain>ATCC MYA-4620 / CBS 123657 / FGSC 9075 / NRRL 31084 / PH-1</strain>
    </source>
</reference>
<reference evidence="6" key="4">
    <citation type="journal article" date="2022" name="Cell Rep.">
        <title>Fungal CFEM effectors negatively regulate a maize wall-associated kinase by interacting with its alternatively spliced variant to dampen resistance.</title>
        <authorList>
            <person name="Zuo N."/>
            <person name="Bai W.Z."/>
            <person name="Wei W.Q."/>
            <person name="Yuan T.L."/>
            <person name="Zhang D."/>
            <person name="Wang Y.Z."/>
            <person name="Tang W.H."/>
        </authorList>
    </citation>
    <scope>FUNCTION</scope>
    <scope>INTERACTION WITH Z.MAYS WAK17 ISOFORM 2 AND LRR5</scope>
    <scope>SUBCELLULAR LOCATION</scope>
    <scope>DISRUPTION PHENOTYPE</scope>
</reference>
<protein>
    <recommendedName>
        <fullName evidence="6">Effector CFEM5</fullName>
    </recommendedName>
</protein>
<evidence type="ECO:0000250" key="1">
    <source>
        <dbReference type="UniProtKB" id="I1REI8"/>
    </source>
</evidence>
<evidence type="ECO:0000255" key="2"/>
<evidence type="ECO:0000255" key="3">
    <source>
        <dbReference type="PROSITE-ProRule" id="PRU01356"/>
    </source>
</evidence>
<evidence type="ECO:0000269" key="4">
    <source>
    </source>
</evidence>
<evidence type="ECO:0000303" key="5">
    <source>
    </source>
</evidence>
<evidence type="ECO:0000305" key="6"/>
<evidence type="ECO:0000312" key="7">
    <source>
        <dbReference type="EMBL" id="CEF74433.1"/>
    </source>
</evidence>
<evidence type="ECO:0000312" key="8">
    <source>
        <dbReference type="Proteomes" id="UP000070720"/>
    </source>
</evidence>
<organism evidence="8">
    <name type="scientific">Gibberella zeae (strain ATCC MYA-4620 / CBS 123657 / FGSC 9075 / NRRL 31084 / PH-1)</name>
    <name type="common">Wheat head blight fungus</name>
    <name type="synonym">Fusarium graminearum</name>
    <dbReference type="NCBI Taxonomy" id="229533"/>
    <lineage>
        <taxon>Eukaryota</taxon>
        <taxon>Fungi</taxon>
        <taxon>Dikarya</taxon>
        <taxon>Ascomycota</taxon>
        <taxon>Pezizomycotina</taxon>
        <taxon>Sordariomycetes</taxon>
        <taxon>Hypocreomycetidae</taxon>
        <taxon>Hypocreales</taxon>
        <taxon>Nectriaceae</taxon>
        <taxon>Fusarium</taxon>
    </lineage>
</organism>
<sequence>MFSLTKSVLFTSIVAIAAQATTAVSSPTQTSLPGLASQVPNCVAVCLRNLHESIGCDVGDIVCLCKSKASLISKVGLCVVGSQCDFEDASSSTDIVRDMCDLVAEDPGTAVIASASKVLDAVVASATTSDIEAPTSTNAAGLVAYDVVKVVVVGAAAAIAI</sequence>
<gene>
    <name evidence="5" type="primary">CFEM5</name>
    <name evidence="7" type="ORF">FGRAMPH1_01T05255</name>
</gene>
<dbReference type="EMBL" id="HG970332">
    <property type="protein sequence ID" value="CEF74433.1"/>
    <property type="molecule type" value="Genomic_DNA"/>
</dbReference>
<dbReference type="RefSeq" id="XP_011318067.1">
    <property type="nucleotide sequence ID" value="XM_011319765.1"/>
</dbReference>
<dbReference type="STRING" id="229533.I1RET0"/>
<dbReference type="KEGG" id="fgr:FGSG_02181"/>
<dbReference type="VEuPathDB" id="FungiDB:FGRAMPH1_01G05255"/>
<dbReference type="eggNOG" id="ENOG502SFDE">
    <property type="taxonomic scope" value="Eukaryota"/>
</dbReference>
<dbReference type="HOGENOM" id="CLU_063084_4_2_1"/>
<dbReference type="InParanoid" id="I1RET0"/>
<dbReference type="OrthoDB" id="134730at110618"/>
<dbReference type="Proteomes" id="UP000070720">
    <property type="component" value="Chromosome 1"/>
</dbReference>
<dbReference type="GO" id="GO:0009897">
    <property type="term" value="C:external side of plasma membrane"/>
    <property type="evidence" value="ECO:0000314"/>
    <property type="project" value="UniProtKB"/>
</dbReference>
<dbReference type="GO" id="GO:0005576">
    <property type="term" value="C:extracellular region"/>
    <property type="evidence" value="ECO:0007669"/>
    <property type="project" value="UniProtKB-SubCell"/>
</dbReference>
<dbReference type="GO" id="GO:0046872">
    <property type="term" value="F:metal ion binding"/>
    <property type="evidence" value="ECO:0007669"/>
    <property type="project" value="UniProtKB-KW"/>
</dbReference>
<dbReference type="GO" id="GO:0140403">
    <property type="term" value="P:effector-mediated suppression of host innate immune response"/>
    <property type="evidence" value="ECO:0000314"/>
    <property type="project" value="UniProtKB"/>
</dbReference>
<dbReference type="InterPro" id="IPR008427">
    <property type="entry name" value="Extracellular_membr_CFEM_dom"/>
</dbReference>
<dbReference type="Pfam" id="PF05730">
    <property type="entry name" value="CFEM"/>
    <property type="match status" value="1"/>
</dbReference>
<dbReference type="SMART" id="SM00747">
    <property type="entry name" value="CFEM"/>
    <property type="match status" value="1"/>
</dbReference>
<dbReference type="PROSITE" id="PS52012">
    <property type="entry name" value="CFEM"/>
    <property type="match status" value="1"/>
</dbReference>
<keyword id="KW-1015">Disulfide bond</keyword>
<keyword id="KW-0325">Glycoprotein</keyword>
<keyword id="KW-0336">GPI-anchor</keyword>
<keyword id="KW-0349">Heme</keyword>
<keyword id="KW-0408">Iron</keyword>
<keyword id="KW-0449">Lipoprotein</keyword>
<keyword id="KW-0472">Membrane</keyword>
<keyword id="KW-0479">Metal-binding</keyword>
<keyword id="KW-1185">Reference proteome</keyword>
<keyword id="KW-0964">Secreted</keyword>
<keyword id="KW-0732">Signal</keyword>
<accession>I1RET0</accession>
<feature type="signal peptide" evidence="2">
    <location>
        <begin position="1"/>
        <end position="23"/>
    </location>
</feature>
<feature type="chain" id="PRO_5010124152" description="Effector CFEM5" evidence="2">
    <location>
        <begin position="24"/>
        <end position="161"/>
    </location>
</feature>
<feature type="domain" description="CFEM" evidence="3">
    <location>
        <begin position="24"/>
        <end position="126"/>
    </location>
</feature>
<feature type="binding site" description="axial binding residue" evidence="3">
    <location>
        <position position="60"/>
    </location>
    <ligand>
        <name>heme</name>
        <dbReference type="ChEBI" id="CHEBI:30413"/>
    </ligand>
    <ligandPart>
        <name>Fe</name>
        <dbReference type="ChEBI" id="CHEBI:18248"/>
    </ligandPart>
</feature>
<feature type="disulfide bond" evidence="3">
    <location>
        <begin position="46"/>
        <end position="78"/>
    </location>
</feature>
<feature type="disulfide bond" evidence="3">
    <location>
        <begin position="56"/>
        <end position="63"/>
    </location>
</feature>
<feature type="disulfide bond" evidence="3">
    <location>
        <begin position="65"/>
        <end position="100"/>
    </location>
</feature>
<comment type="function">
    <text evidence="4">Suppresses host programmed cell death during infection by binding to Z.mays WAK17 isoform 2 and Z.mays LRR5, to prevent activation of Z.mays WAK17 isoform 1 and the downstream hypersensitive response.</text>
</comment>
<comment type="subunit">
    <text evidence="4">Interacts with Z.mays LRR5; the interaction is direct (PubMed:36577386). Interacts with Z.mays WAK17 isoform 2; the interaction is direct (PubMed:36577386).</text>
</comment>
<comment type="subcellular location">
    <subcellularLocation>
        <location evidence="2">Membrane</location>
        <topology evidence="2">Lipid-anchor</topology>
        <topology evidence="2">GPI-anchor</topology>
    </subcellularLocation>
    <subcellularLocation>
        <location evidence="4">Secreted</location>
    </subcellularLocation>
    <text evidence="4">Localizes to the cell surface of spores.</text>
</comment>
<comment type="domain">
    <text evidence="1">The CFEM domain mediates interactions with host proteins.</text>
</comment>
<comment type="disruption phenotype">
    <text evidence="4">Decreases virulence in maize stalks (PubMed:36577386). No sensitivity to Congo Red (cell wall disrupting agent) or sodium dodecyl sulfate (SDS) (membrane disrupting agent), and in vitro cell population growth appears normal (PubMed:36577386).</text>
</comment>
<comment type="similarity">
    <text evidence="6">Belongs to the RBT5 family.</text>
</comment>
<proteinExistence type="evidence at protein level"/>
<name>CFM5_GIBZE</name>